<sequence>MEIDIKKIANMFDHTRLAPDATLAEIEKLCNEAKQYGFFSVCVNPYFIEAAKKFLSGSNVLVCTVIGFPLGQNTIETKVFETKDCVAKGAHEIDMVINISKLKEGDVDYCVNEINEIKKACNGALLKVIVETCLLTPKEKELAAQIVLKSNADYIKTSTGFSTAGATFEDIEIFKKVVGNNKLIKAAGGIKTTDDLLKMISLGANRIGTSRGVELIEGLKNK</sequence>
<gene>
    <name evidence="1" type="primary">deoC</name>
    <name type="ordered locus">MYPE1170</name>
</gene>
<proteinExistence type="inferred from homology"/>
<feature type="chain" id="PRO_0000057243" description="Deoxyribose-phosphate aldolase">
    <location>
        <begin position="1"/>
        <end position="222"/>
    </location>
</feature>
<feature type="active site" description="Proton donor/acceptor" evidence="1">
    <location>
        <position position="94"/>
    </location>
</feature>
<feature type="active site" description="Schiff-base intermediate with acetaldehyde" evidence="1">
    <location>
        <position position="156"/>
    </location>
</feature>
<feature type="active site" description="Proton donor/acceptor" evidence="1">
    <location>
        <position position="185"/>
    </location>
</feature>
<reference key="1">
    <citation type="journal article" date="2002" name="Nucleic Acids Res.">
        <title>The complete genomic sequence of Mycoplasma penetrans, an intracellular bacterial pathogen in humans.</title>
        <authorList>
            <person name="Sasaki Y."/>
            <person name="Ishikawa J."/>
            <person name="Yamashita A."/>
            <person name="Oshima K."/>
            <person name="Kenri T."/>
            <person name="Furuya K."/>
            <person name="Yoshino C."/>
            <person name="Horino A."/>
            <person name="Shiba T."/>
            <person name="Sasaki T."/>
            <person name="Hattori M."/>
        </authorList>
    </citation>
    <scope>NUCLEOTIDE SEQUENCE [LARGE SCALE GENOMIC DNA]</scope>
    <source>
        <strain>HF-2</strain>
    </source>
</reference>
<name>DEOC_MALP2</name>
<comment type="function">
    <text evidence="1">Catalyzes a reversible aldol reaction between acetaldehyde and D-glyceraldehyde 3-phosphate to generate 2-deoxy-D-ribose 5-phosphate.</text>
</comment>
<comment type="catalytic activity">
    <reaction evidence="1">
        <text>2-deoxy-D-ribose 5-phosphate = D-glyceraldehyde 3-phosphate + acetaldehyde</text>
        <dbReference type="Rhea" id="RHEA:12821"/>
        <dbReference type="ChEBI" id="CHEBI:15343"/>
        <dbReference type="ChEBI" id="CHEBI:59776"/>
        <dbReference type="ChEBI" id="CHEBI:62877"/>
        <dbReference type="EC" id="4.1.2.4"/>
    </reaction>
</comment>
<comment type="pathway">
    <text evidence="1">Carbohydrate degradation; 2-deoxy-D-ribose 1-phosphate degradation; D-glyceraldehyde 3-phosphate and acetaldehyde from 2-deoxy-alpha-D-ribose 1-phosphate: step 2/2.</text>
</comment>
<comment type="subcellular location">
    <subcellularLocation>
        <location evidence="1">Cytoplasm</location>
    </subcellularLocation>
</comment>
<comment type="similarity">
    <text evidence="1">Belongs to the DeoC/FbaB aldolase family. DeoC type 1 subfamily.</text>
</comment>
<keyword id="KW-0963">Cytoplasm</keyword>
<keyword id="KW-0456">Lyase</keyword>
<keyword id="KW-1185">Reference proteome</keyword>
<keyword id="KW-0704">Schiff base</keyword>
<protein>
    <recommendedName>
        <fullName evidence="1">Deoxyribose-phosphate aldolase</fullName>
        <shortName evidence="1">DERA</shortName>
        <ecNumber evidence="1">4.1.2.4</ecNumber>
    </recommendedName>
    <alternativeName>
        <fullName evidence="1">2-deoxy-D-ribose 5-phosphate aldolase</fullName>
    </alternativeName>
    <alternativeName>
        <fullName evidence="1">Phosphodeoxyriboaldolase</fullName>
        <shortName evidence="1">Deoxyriboaldolase</shortName>
    </alternativeName>
</protein>
<accession>Q8EWT4</accession>
<evidence type="ECO:0000255" key="1">
    <source>
        <dbReference type="HAMAP-Rule" id="MF_00114"/>
    </source>
</evidence>
<organism>
    <name type="scientific">Malacoplasma penetrans (strain HF-2)</name>
    <name type="common">Mycoplasma penetrans</name>
    <dbReference type="NCBI Taxonomy" id="272633"/>
    <lineage>
        <taxon>Bacteria</taxon>
        <taxon>Bacillati</taxon>
        <taxon>Mycoplasmatota</taxon>
        <taxon>Mycoplasmoidales</taxon>
        <taxon>Mycoplasmoidaceae</taxon>
        <taxon>Malacoplasma</taxon>
    </lineage>
</organism>
<dbReference type="EC" id="4.1.2.4" evidence="1"/>
<dbReference type="EMBL" id="BA000026">
    <property type="protein sequence ID" value="BAC43909.1"/>
    <property type="molecule type" value="Genomic_DNA"/>
</dbReference>
<dbReference type="RefSeq" id="WP_011076945.1">
    <property type="nucleotide sequence ID" value="NC_004432.1"/>
</dbReference>
<dbReference type="SMR" id="Q8EWT4"/>
<dbReference type="FunCoup" id="Q8EWT4">
    <property type="interactions" value="156"/>
</dbReference>
<dbReference type="STRING" id="272633.gene:10731210"/>
<dbReference type="KEGG" id="mpe:MYPE1170"/>
<dbReference type="eggNOG" id="COG0274">
    <property type="taxonomic scope" value="Bacteria"/>
</dbReference>
<dbReference type="HOGENOM" id="CLU_053595_0_1_14"/>
<dbReference type="InParanoid" id="Q8EWT4"/>
<dbReference type="UniPathway" id="UPA00002">
    <property type="reaction ID" value="UER00468"/>
</dbReference>
<dbReference type="Proteomes" id="UP000002522">
    <property type="component" value="Chromosome"/>
</dbReference>
<dbReference type="GO" id="GO:0005737">
    <property type="term" value="C:cytoplasm"/>
    <property type="evidence" value="ECO:0007669"/>
    <property type="project" value="UniProtKB-SubCell"/>
</dbReference>
<dbReference type="GO" id="GO:0004139">
    <property type="term" value="F:deoxyribose-phosphate aldolase activity"/>
    <property type="evidence" value="ECO:0007669"/>
    <property type="project" value="UniProtKB-UniRule"/>
</dbReference>
<dbReference type="GO" id="GO:0006018">
    <property type="term" value="P:2-deoxyribose 1-phosphate catabolic process"/>
    <property type="evidence" value="ECO:0007669"/>
    <property type="project" value="UniProtKB-UniRule"/>
</dbReference>
<dbReference type="GO" id="GO:0016052">
    <property type="term" value="P:carbohydrate catabolic process"/>
    <property type="evidence" value="ECO:0007669"/>
    <property type="project" value="TreeGrafter"/>
</dbReference>
<dbReference type="GO" id="GO:0009264">
    <property type="term" value="P:deoxyribonucleotide catabolic process"/>
    <property type="evidence" value="ECO:0007669"/>
    <property type="project" value="InterPro"/>
</dbReference>
<dbReference type="CDD" id="cd00959">
    <property type="entry name" value="DeoC"/>
    <property type="match status" value="1"/>
</dbReference>
<dbReference type="FunFam" id="3.20.20.70:FF:000044">
    <property type="entry name" value="Deoxyribose-phosphate aldolase"/>
    <property type="match status" value="1"/>
</dbReference>
<dbReference type="Gene3D" id="3.20.20.70">
    <property type="entry name" value="Aldolase class I"/>
    <property type="match status" value="1"/>
</dbReference>
<dbReference type="HAMAP" id="MF_00114">
    <property type="entry name" value="DeoC_type1"/>
    <property type="match status" value="1"/>
</dbReference>
<dbReference type="InterPro" id="IPR013785">
    <property type="entry name" value="Aldolase_TIM"/>
</dbReference>
<dbReference type="InterPro" id="IPR011343">
    <property type="entry name" value="DeoC"/>
</dbReference>
<dbReference type="InterPro" id="IPR002915">
    <property type="entry name" value="DeoC/FbaB/LacD_aldolase"/>
</dbReference>
<dbReference type="InterPro" id="IPR028581">
    <property type="entry name" value="DeoC_typeI"/>
</dbReference>
<dbReference type="NCBIfam" id="TIGR00126">
    <property type="entry name" value="deoC"/>
    <property type="match status" value="1"/>
</dbReference>
<dbReference type="PANTHER" id="PTHR10889">
    <property type="entry name" value="DEOXYRIBOSE-PHOSPHATE ALDOLASE"/>
    <property type="match status" value="1"/>
</dbReference>
<dbReference type="PANTHER" id="PTHR10889:SF1">
    <property type="entry name" value="DEOXYRIBOSE-PHOSPHATE ALDOLASE"/>
    <property type="match status" value="1"/>
</dbReference>
<dbReference type="Pfam" id="PF01791">
    <property type="entry name" value="DeoC"/>
    <property type="match status" value="1"/>
</dbReference>
<dbReference type="PIRSF" id="PIRSF001357">
    <property type="entry name" value="DeoC"/>
    <property type="match status" value="1"/>
</dbReference>
<dbReference type="SMART" id="SM01133">
    <property type="entry name" value="DeoC"/>
    <property type="match status" value="1"/>
</dbReference>
<dbReference type="SUPFAM" id="SSF51569">
    <property type="entry name" value="Aldolase"/>
    <property type="match status" value="1"/>
</dbReference>